<protein>
    <recommendedName>
        <fullName evidence="1">UPF0122 protein BA_3984/GBAA_3984/BAS3697</fullName>
    </recommendedName>
</protein>
<name>Y3984_BACAN</name>
<sequence>MLEKTTRMNYLFDFYQSLLTQKQRSYMSLYYLDDLSLGEIAEEFDVSRQAVYDNIKRTEAMLEEYEEKLVLLQKFQERQRLVAKLKQLISEEEHVNEEMKQVVEAIEKLD</sequence>
<keyword id="KW-1185">Reference proteome</keyword>
<feature type="chain" id="PRO_0000211858" description="UPF0122 protein BA_3984/GBAA_3984/BAS3697">
    <location>
        <begin position="1"/>
        <end position="110"/>
    </location>
</feature>
<dbReference type="EMBL" id="AE016879">
    <property type="protein sequence ID" value="AAP27712.1"/>
    <property type="molecule type" value="Genomic_DNA"/>
</dbReference>
<dbReference type="EMBL" id="AE017334">
    <property type="protein sequence ID" value="AAT33098.1"/>
    <property type="molecule type" value="Genomic_DNA"/>
</dbReference>
<dbReference type="EMBL" id="AE017225">
    <property type="protein sequence ID" value="AAT55999.1"/>
    <property type="molecule type" value="Genomic_DNA"/>
</dbReference>
<dbReference type="RefSeq" id="NP_846226.1">
    <property type="nucleotide sequence ID" value="NC_003997.3"/>
</dbReference>
<dbReference type="RefSeq" id="WP_000891062.1">
    <property type="nucleotide sequence ID" value="NZ_WXXJ01000026.1"/>
</dbReference>
<dbReference type="RefSeq" id="YP_029948.1">
    <property type="nucleotide sequence ID" value="NC_005945.1"/>
</dbReference>
<dbReference type="SMR" id="Q81WJ1"/>
<dbReference type="STRING" id="261594.GBAA_3984"/>
<dbReference type="DNASU" id="1086774"/>
<dbReference type="KEGG" id="ban:BA_3984"/>
<dbReference type="KEGG" id="bar:GBAA_3984"/>
<dbReference type="KEGG" id="bat:BAS3697"/>
<dbReference type="PATRIC" id="fig|198094.11.peg.3954"/>
<dbReference type="eggNOG" id="COG2739">
    <property type="taxonomic scope" value="Bacteria"/>
</dbReference>
<dbReference type="HOGENOM" id="CLU_129218_1_0_9"/>
<dbReference type="OMA" id="YYKNRSI"/>
<dbReference type="OrthoDB" id="6392at2"/>
<dbReference type="Proteomes" id="UP000000427">
    <property type="component" value="Chromosome"/>
</dbReference>
<dbReference type="Proteomes" id="UP000000594">
    <property type="component" value="Chromosome"/>
</dbReference>
<dbReference type="Gene3D" id="1.10.10.10">
    <property type="entry name" value="Winged helix-like DNA-binding domain superfamily/Winged helix DNA-binding domain"/>
    <property type="match status" value="1"/>
</dbReference>
<dbReference type="HAMAP" id="MF_00245">
    <property type="entry name" value="UPF0122"/>
    <property type="match status" value="1"/>
</dbReference>
<dbReference type="InterPro" id="IPR013324">
    <property type="entry name" value="RNA_pol_sigma_r3/r4-like"/>
</dbReference>
<dbReference type="InterPro" id="IPR007394">
    <property type="entry name" value="UPF0122"/>
</dbReference>
<dbReference type="InterPro" id="IPR054831">
    <property type="entry name" value="UPF0122_fam_protein"/>
</dbReference>
<dbReference type="InterPro" id="IPR036388">
    <property type="entry name" value="WH-like_DNA-bd_sf"/>
</dbReference>
<dbReference type="NCBIfam" id="NF001068">
    <property type="entry name" value="PRK00118.1-4"/>
    <property type="match status" value="1"/>
</dbReference>
<dbReference type="NCBIfam" id="NF001070">
    <property type="entry name" value="PRK00118.1-6"/>
    <property type="match status" value="1"/>
</dbReference>
<dbReference type="NCBIfam" id="NF045758">
    <property type="entry name" value="YlxM"/>
    <property type="match status" value="1"/>
</dbReference>
<dbReference type="PANTHER" id="PTHR40083">
    <property type="entry name" value="UPF0122 PROTEIN CBO2450/CLC_2298"/>
    <property type="match status" value="1"/>
</dbReference>
<dbReference type="PANTHER" id="PTHR40083:SF1">
    <property type="entry name" value="UPF0122 PROTEIN YLXM"/>
    <property type="match status" value="1"/>
</dbReference>
<dbReference type="Pfam" id="PF04297">
    <property type="entry name" value="UPF0122"/>
    <property type="match status" value="1"/>
</dbReference>
<dbReference type="SUPFAM" id="SSF88659">
    <property type="entry name" value="Sigma3 and sigma4 domains of RNA polymerase sigma factors"/>
    <property type="match status" value="1"/>
</dbReference>
<evidence type="ECO:0000255" key="1">
    <source>
        <dbReference type="HAMAP-Rule" id="MF_00245"/>
    </source>
</evidence>
<proteinExistence type="inferred from homology"/>
<organism>
    <name type="scientific">Bacillus anthracis</name>
    <dbReference type="NCBI Taxonomy" id="1392"/>
    <lineage>
        <taxon>Bacteria</taxon>
        <taxon>Bacillati</taxon>
        <taxon>Bacillota</taxon>
        <taxon>Bacilli</taxon>
        <taxon>Bacillales</taxon>
        <taxon>Bacillaceae</taxon>
        <taxon>Bacillus</taxon>
        <taxon>Bacillus cereus group</taxon>
    </lineage>
</organism>
<gene>
    <name type="ordered locus">BA_3984</name>
    <name type="ordered locus">GBAA_3984</name>
    <name type="ordered locus">BAS3697</name>
</gene>
<accession>Q81WJ1</accession>
<accession>Q6HUP0</accession>
<accession>Q6KNX3</accession>
<comment type="function">
    <text evidence="1">Might take part in the signal recognition particle (SRP) pathway. This is inferred from the conservation of its genetic proximity to ftsY/ffh. May be a regulatory protein.</text>
</comment>
<comment type="similarity">
    <text evidence="1">Belongs to the UPF0122 family.</text>
</comment>
<reference key="1">
    <citation type="journal article" date="2003" name="Nature">
        <title>The genome sequence of Bacillus anthracis Ames and comparison to closely related bacteria.</title>
        <authorList>
            <person name="Read T.D."/>
            <person name="Peterson S.N."/>
            <person name="Tourasse N.J."/>
            <person name="Baillie L.W."/>
            <person name="Paulsen I.T."/>
            <person name="Nelson K.E."/>
            <person name="Tettelin H."/>
            <person name="Fouts D.E."/>
            <person name="Eisen J.A."/>
            <person name="Gill S.R."/>
            <person name="Holtzapple E.K."/>
            <person name="Okstad O.A."/>
            <person name="Helgason E."/>
            <person name="Rilstone J."/>
            <person name="Wu M."/>
            <person name="Kolonay J.F."/>
            <person name="Beanan M.J."/>
            <person name="Dodson R.J."/>
            <person name="Brinkac L.M."/>
            <person name="Gwinn M.L."/>
            <person name="DeBoy R.T."/>
            <person name="Madpu R."/>
            <person name="Daugherty S.C."/>
            <person name="Durkin A.S."/>
            <person name="Haft D.H."/>
            <person name="Nelson W.C."/>
            <person name="Peterson J.D."/>
            <person name="Pop M."/>
            <person name="Khouri H.M."/>
            <person name="Radune D."/>
            <person name="Benton J.L."/>
            <person name="Mahamoud Y."/>
            <person name="Jiang L."/>
            <person name="Hance I.R."/>
            <person name="Weidman J.F."/>
            <person name="Berry K.J."/>
            <person name="Plaut R.D."/>
            <person name="Wolf A.M."/>
            <person name="Watkins K.L."/>
            <person name="Nierman W.C."/>
            <person name="Hazen A."/>
            <person name="Cline R.T."/>
            <person name="Redmond C."/>
            <person name="Thwaite J.E."/>
            <person name="White O."/>
            <person name="Salzberg S.L."/>
            <person name="Thomason B."/>
            <person name="Friedlander A.M."/>
            <person name="Koehler T.M."/>
            <person name="Hanna P.C."/>
            <person name="Kolstoe A.-B."/>
            <person name="Fraser C.M."/>
        </authorList>
    </citation>
    <scope>NUCLEOTIDE SEQUENCE [LARGE SCALE GENOMIC DNA]</scope>
    <source>
        <strain>Ames / isolate Porton</strain>
    </source>
</reference>
<reference key="2">
    <citation type="journal article" date="2009" name="J. Bacteriol.">
        <title>The complete genome sequence of Bacillus anthracis Ames 'Ancestor'.</title>
        <authorList>
            <person name="Ravel J."/>
            <person name="Jiang L."/>
            <person name="Stanley S.T."/>
            <person name="Wilson M.R."/>
            <person name="Decker R.S."/>
            <person name="Read T.D."/>
            <person name="Worsham P."/>
            <person name="Keim P.S."/>
            <person name="Salzberg S.L."/>
            <person name="Fraser-Liggett C.M."/>
            <person name="Rasko D.A."/>
        </authorList>
    </citation>
    <scope>NUCLEOTIDE SEQUENCE [LARGE SCALE GENOMIC DNA]</scope>
    <source>
        <strain>Ames ancestor</strain>
    </source>
</reference>
<reference key="3">
    <citation type="submission" date="2004-01" db="EMBL/GenBank/DDBJ databases">
        <title>Complete genome sequence of Bacillus anthracis Sterne.</title>
        <authorList>
            <person name="Brettin T.S."/>
            <person name="Bruce D."/>
            <person name="Challacombe J.F."/>
            <person name="Gilna P."/>
            <person name="Han C."/>
            <person name="Hill K."/>
            <person name="Hitchcock P."/>
            <person name="Jackson P."/>
            <person name="Keim P."/>
            <person name="Longmire J."/>
            <person name="Lucas S."/>
            <person name="Okinaka R."/>
            <person name="Richardson P."/>
            <person name="Rubin E."/>
            <person name="Tice H."/>
        </authorList>
    </citation>
    <scope>NUCLEOTIDE SEQUENCE [LARGE SCALE GENOMIC DNA]</scope>
    <source>
        <strain>Sterne</strain>
    </source>
</reference>